<name>SRCA_ASPFU</name>
<evidence type="ECO:0000250" key="1">
    <source>
        <dbReference type="UniProtKB" id="P04191"/>
    </source>
</evidence>
<evidence type="ECO:0000250" key="2">
    <source>
        <dbReference type="UniProtKB" id="P11607"/>
    </source>
</evidence>
<evidence type="ECO:0000250" key="3">
    <source>
        <dbReference type="UniProtKB" id="P16615"/>
    </source>
</evidence>
<evidence type="ECO:0000255" key="4"/>
<evidence type="ECO:0000269" key="5">
    <source>
    </source>
</evidence>
<evidence type="ECO:0000269" key="6">
    <source>
    </source>
</evidence>
<evidence type="ECO:0000303" key="7">
    <source>
    </source>
</evidence>
<evidence type="ECO:0000305" key="8"/>
<evidence type="ECO:0000305" key="9">
    <source>
    </source>
</evidence>
<sequence>MNNEALAEDPPTPLWELVLEQFKDQLVLILLGSAAVSFVLALFEEGDDWTAFVDPVVILTILILNAVVGVTQESSAEKAIAALQEYSANEATVVRDGKTQRIKAEDLVPGDIIHIGVGDRVPADCRLLAIQSNSFRVDQAVLTGESESVSKDTRSIKDEQAVKQDQTNILFSGTSVVNGHATAIVVLTGASTAIGGIHESITSQISEPTPLKQKLNDFGDMLAKVITVICVLVWLINVEHFNDPAHGGWAKGAIYYLKIAVSLGVAAIPEGLAVVITTCLALGTRKMAAKNAVVRSLPSVETLGSCSVICSDKTGTLTTNQMSVEKLVYLNASGDDLEEIDVEGTTFAPEGKLSRNGKVLQNLAVTSSTVRQMAEVMALCNSATLAHDPKSGTFSCIGEPTEGALRVLVEKIGTDDMATNEKLFRLPASQRLHVSSAHYESRLPLLATYEFSRDRKSMSVLVTKDKAQRLLVKGAPESILERCSYVLLGPDGPRVPLTRVYSDLLAREVVEYGNRGLRVIALASVDDIADNPLLHNAQTTEEYAQLERNMTLIGLVGMLDPPRTEVADSVKKCRAAGIRVIVITGDNRNTAESICRQIGVFGEDEDLTGKSFTGREFDALSESEKLEAVKKASLFSRTEPSHKSKLVDLLQSLGHVVAMTGDGVNDAPALKKADIGVAMGTGTDVAKLAADMVLTDDNFATITVAVEEGRSIYSNTQQFIRYLISSNIGEVVSIFLTAALGMPEALIPVQLLWVNLVTDGLPATALSFNPPDHDVMRRAPRKRDEPLVGGWLLFRYLAIGTYVGAATVFGYIWWFVYNPEGPQISFWQLSHFHKCSAQFPEIGCEMFSNEMSRSASTVSLSILVVIEMLNAMNALSSSESLLAFPLWNNMMLVYAIILSMTLHFAILYIPFLQTLFSILPLNWTEWKAVLAISAPVVAIDELLKYAERRLYTLPAIAGEQQNGVAFKPKKA</sequence>
<accession>Q4WND5</accession>
<keyword id="KW-0067">ATP-binding</keyword>
<keyword id="KW-0106">Calcium</keyword>
<keyword id="KW-0109">Calcium transport</keyword>
<keyword id="KW-0256">Endoplasmic reticulum</keyword>
<keyword id="KW-0378">Hydrolase</keyword>
<keyword id="KW-0406">Ion transport</keyword>
<keyword id="KW-0460">Magnesium</keyword>
<keyword id="KW-0472">Membrane</keyword>
<keyword id="KW-0479">Metal-binding</keyword>
<keyword id="KW-0547">Nucleotide-binding</keyword>
<keyword id="KW-1185">Reference proteome</keyword>
<keyword id="KW-1278">Translocase</keyword>
<keyword id="KW-0812">Transmembrane</keyword>
<keyword id="KW-1133">Transmembrane helix</keyword>
<keyword id="KW-0813">Transport</keyword>
<keyword id="KW-0834">Unfolded protein response</keyword>
<keyword id="KW-0843">Virulence</keyword>
<feature type="chain" id="PRO_0000456885" description="Endoplasmic reticulum calcium ATPase srcA">
    <location>
        <begin position="1"/>
        <end position="971"/>
    </location>
</feature>
<feature type="topological domain" description="Cytoplasmic" evidence="8">
    <location>
        <begin position="1"/>
        <end position="25"/>
    </location>
</feature>
<feature type="transmembrane region" description="Helical" evidence="4">
    <location>
        <begin position="26"/>
        <end position="46"/>
    </location>
</feature>
<feature type="topological domain" description="Lumenal" evidence="8">
    <location>
        <begin position="47"/>
        <end position="49"/>
    </location>
</feature>
<feature type="transmembrane region" description="Helical" evidence="4">
    <location>
        <begin position="50"/>
        <end position="70"/>
    </location>
</feature>
<feature type="topological domain" description="Cytoplasmic" evidence="8">
    <location>
        <begin position="71"/>
        <end position="217"/>
    </location>
</feature>
<feature type="transmembrane region" description="Helical" evidence="4">
    <location>
        <begin position="218"/>
        <end position="238"/>
    </location>
</feature>
<feature type="topological domain" description="Lumenal" evidence="8">
    <location>
        <begin position="239"/>
        <end position="262"/>
    </location>
</feature>
<feature type="transmembrane region" description="Helical" evidence="4">
    <location>
        <begin position="263"/>
        <end position="283"/>
    </location>
</feature>
<feature type="topological domain" description="Cytoplasmic" evidence="8">
    <location>
        <begin position="284"/>
        <end position="718"/>
    </location>
</feature>
<feature type="transmembrane region" description="Helical" evidence="4">
    <location>
        <begin position="719"/>
        <end position="741"/>
    </location>
</feature>
<feature type="topological domain" description="Lumenal" evidence="8">
    <location>
        <begin position="742"/>
        <end position="750"/>
    </location>
</feature>
<feature type="transmembrane region" description="Helical" evidence="4">
    <location>
        <begin position="751"/>
        <end position="770"/>
    </location>
</feature>
<feature type="topological domain" description="Cytoplasmic" evidence="8">
    <location>
        <begin position="771"/>
        <end position="795"/>
    </location>
</feature>
<feature type="transmembrane region" description="Helical" evidence="4">
    <location>
        <begin position="796"/>
        <end position="816"/>
    </location>
</feature>
<feature type="topological domain" description="Lumenal" evidence="8">
    <location>
        <begin position="817"/>
        <end position="854"/>
    </location>
</feature>
<feature type="transmembrane region" description="Helical" evidence="4">
    <location>
        <begin position="855"/>
        <end position="875"/>
    </location>
</feature>
<feature type="topological domain" description="Cytoplasmic" evidence="8">
    <location>
        <begin position="876"/>
        <end position="891"/>
    </location>
</feature>
<feature type="transmembrane region" description="Helical" evidence="4">
    <location>
        <begin position="892"/>
        <end position="912"/>
    </location>
</feature>
<feature type="topological domain" description="Lumenal" evidence="8">
    <location>
        <begin position="913"/>
        <end position="917"/>
    </location>
</feature>
<feature type="transmembrane region" description="Helical" evidence="4">
    <location>
        <begin position="918"/>
        <end position="938"/>
    </location>
</feature>
<feature type="topological domain" description="Cytoplasmic" evidence="8">
    <location>
        <begin position="939"/>
        <end position="971"/>
    </location>
</feature>
<feature type="active site" description="4-aspartylphosphate intermediate" evidence="1">
    <location>
        <position position="312"/>
    </location>
</feature>
<feature type="binding site" evidence="2">
    <location>
        <position position="265"/>
    </location>
    <ligand>
        <name>Ca(2+)</name>
        <dbReference type="ChEBI" id="CHEBI:29108"/>
        <label>1</label>
    </ligand>
</feature>
<feature type="binding site" evidence="2">
    <location>
        <position position="266"/>
    </location>
    <ligand>
        <name>Ca(2+)</name>
        <dbReference type="ChEBI" id="CHEBI:29108"/>
        <label>1</label>
    </ligand>
</feature>
<feature type="binding site" evidence="2">
    <location>
        <position position="268"/>
    </location>
    <ligand>
        <name>Ca(2+)</name>
        <dbReference type="ChEBI" id="CHEBI:29108"/>
        <label>1</label>
    </ligand>
</feature>
<feature type="binding site" evidence="2">
    <location>
        <position position="270"/>
    </location>
    <ligand>
        <name>Ca(2+)</name>
        <dbReference type="ChEBI" id="CHEBI:29108"/>
        <label>1</label>
    </ligand>
</feature>
<feature type="binding site" evidence="2">
    <location>
        <position position="312"/>
    </location>
    <ligand>
        <name>Mg(2+)</name>
        <dbReference type="ChEBI" id="CHEBI:18420"/>
    </ligand>
</feature>
<feature type="binding site" evidence="2">
    <location>
        <position position="314"/>
    </location>
    <ligand>
        <name>ATP</name>
        <dbReference type="ChEBI" id="CHEBI:30616"/>
    </ligand>
</feature>
<feature type="binding site" evidence="2">
    <location>
        <position position="314"/>
    </location>
    <ligand>
        <name>Mg(2+)</name>
        <dbReference type="ChEBI" id="CHEBI:18420"/>
    </ligand>
</feature>
<feature type="binding site" evidence="2">
    <location>
        <position position="402"/>
    </location>
    <ligand>
        <name>ATP</name>
        <dbReference type="ChEBI" id="CHEBI:30616"/>
    </ligand>
</feature>
<feature type="binding site" evidence="2">
    <location>
        <position position="453"/>
    </location>
    <ligand>
        <name>ATP</name>
        <dbReference type="ChEBI" id="CHEBI:30616"/>
    </ligand>
</feature>
<feature type="binding site" evidence="2">
    <location>
        <position position="473"/>
    </location>
    <ligand>
        <name>ATP</name>
        <dbReference type="ChEBI" id="CHEBI:30616"/>
    </ligand>
</feature>
<feature type="binding site" evidence="1">
    <location>
        <position position="518"/>
    </location>
    <ligand>
        <name>ATP</name>
        <dbReference type="ChEBI" id="CHEBI:30616"/>
    </ligand>
</feature>
<feature type="binding site" evidence="2">
    <location>
        <position position="637"/>
    </location>
    <ligand>
        <name>ATP</name>
        <dbReference type="ChEBI" id="CHEBI:30616"/>
    </ligand>
</feature>
<feature type="binding site" evidence="1">
    <location>
        <position position="643"/>
    </location>
    <ligand>
        <name>ATP</name>
        <dbReference type="ChEBI" id="CHEBI:30616"/>
    </ligand>
</feature>
<feature type="binding site" evidence="2">
    <location>
        <position position="662"/>
    </location>
    <ligand>
        <name>Mg(2+)</name>
        <dbReference type="ChEBI" id="CHEBI:18420"/>
    </ligand>
</feature>
<feature type="binding site" evidence="2">
    <location>
        <position position="665"/>
    </location>
    <ligand>
        <name>ATP</name>
        <dbReference type="ChEBI" id="CHEBI:30616"/>
    </ligand>
</feature>
<feature type="binding site" evidence="2">
    <location>
        <position position="727"/>
    </location>
    <ligand>
        <name>Ca(2+)</name>
        <dbReference type="ChEBI" id="CHEBI:29108"/>
        <label>2</label>
    </ligand>
</feature>
<feature type="binding site" evidence="2">
    <location>
        <position position="730"/>
    </location>
    <ligand>
        <name>Ca(2+)</name>
        <dbReference type="ChEBI" id="CHEBI:29108"/>
        <label>2</label>
    </ligand>
</feature>
<feature type="binding site" evidence="2">
    <location>
        <position position="755"/>
    </location>
    <ligand>
        <name>Ca(2+)</name>
        <dbReference type="ChEBI" id="CHEBI:29108"/>
        <label>1</label>
    </ligand>
</feature>
<feature type="binding site" evidence="2">
    <location>
        <position position="758"/>
    </location>
    <ligand>
        <name>Ca(2+)</name>
        <dbReference type="ChEBI" id="CHEBI:29108"/>
        <label>2</label>
    </ligand>
</feature>
<feature type="binding site" evidence="2">
    <location>
        <position position="759"/>
    </location>
    <ligand>
        <name>Ca(2+)</name>
        <dbReference type="ChEBI" id="CHEBI:29108"/>
        <label>1</label>
    </ligand>
</feature>
<feature type="binding site" evidence="2">
    <location>
        <position position="759"/>
    </location>
    <ligand>
        <name>Ca(2+)</name>
        <dbReference type="ChEBI" id="CHEBI:29108"/>
        <label>2</label>
    </ligand>
</feature>
<feature type="binding site" evidence="1">
    <location>
        <position position="867"/>
    </location>
    <ligand>
        <name>Ca(2+)</name>
        <dbReference type="ChEBI" id="CHEBI:29108"/>
        <label>2</label>
    </ligand>
</feature>
<proteinExistence type="evidence at transcript level"/>
<comment type="function">
    <text evidence="5 6 9">Magnesium-dependent enzyme catalyzes the hydrolysis of ATP coupled with the translocation of calcium from the cytosol to the endoplasmic reticulum lumen (Probable). Its activity is coupled to the unfolded protein response (UPR) and Ca(2+) import into the endoplasmioc reticulum is important for redox homeostasis, virulence, cell wall biosynthesis, and resistance to antifungal compounds that inhibit Ca2+ signaling (PubMed:32487759, PubMed:34663092). With pmrA, promotes radial growth and conidiation (PubMed:32487759).</text>
</comment>
<comment type="catalytic activity">
    <reaction evidence="9">
        <text>Ca(2+)(in) + ATP + H2O = Ca(2+)(out) + ADP + phosphate + H(+)</text>
        <dbReference type="Rhea" id="RHEA:18105"/>
        <dbReference type="ChEBI" id="CHEBI:15377"/>
        <dbReference type="ChEBI" id="CHEBI:15378"/>
        <dbReference type="ChEBI" id="CHEBI:29108"/>
        <dbReference type="ChEBI" id="CHEBI:30616"/>
        <dbReference type="ChEBI" id="CHEBI:43474"/>
        <dbReference type="ChEBI" id="CHEBI:456216"/>
        <dbReference type="EC" id="7.2.2.10"/>
    </reaction>
    <physiologicalReaction direction="left-to-right" evidence="9">
        <dbReference type="Rhea" id="RHEA:18106"/>
    </physiologicalReaction>
</comment>
<comment type="cofactor">
    <cofactor evidence="8">
        <name>Mg(2+)</name>
        <dbReference type="ChEBI" id="CHEBI:18420"/>
    </cofactor>
</comment>
<comment type="subcellular location">
    <subcellularLocation>
        <location evidence="5">Endoplasmic reticulum membrane</location>
        <topology evidence="4">Multi-pass membrane protein</topology>
    </subcellularLocation>
</comment>
<comment type="induction">
    <text evidence="5">Expression is induced by the unfolded protein response (UPR) during ER stress.</text>
</comment>
<comment type="disruption phenotype">
    <text evidence="5">Leads to severe polarity defect, hypersensitivity to ER stress, and attenuated virulence; when prmA is also deleted.</text>
</comment>
<comment type="similarity">
    <text evidence="8">Belongs to the cation transport ATPase (P-type) (TC 3.A.3) family.</text>
</comment>
<protein>
    <recommendedName>
        <fullName evidence="7">Endoplasmic reticulum calcium ATPase srcA</fullName>
        <ecNumber evidence="9">7.2.2.10</ecNumber>
    </recommendedName>
    <alternativeName>
        <fullName evidence="7">Calcium pump srcA</fullName>
    </alternativeName>
    <alternativeName>
        <fullName evidence="3">Endoplasmic reticulum class 1/2 Ca(2+) ATPase</fullName>
    </alternativeName>
</protein>
<gene>
    <name type="primary">srcA</name>
    <name type="ORF">AFUA_6G06740</name>
</gene>
<organism>
    <name type="scientific">Aspergillus fumigatus (strain ATCC MYA-4609 / CBS 101355 / FGSC A1100 / Af293)</name>
    <name type="common">Neosartorya fumigata</name>
    <dbReference type="NCBI Taxonomy" id="330879"/>
    <lineage>
        <taxon>Eukaryota</taxon>
        <taxon>Fungi</taxon>
        <taxon>Dikarya</taxon>
        <taxon>Ascomycota</taxon>
        <taxon>Pezizomycotina</taxon>
        <taxon>Eurotiomycetes</taxon>
        <taxon>Eurotiomycetidae</taxon>
        <taxon>Eurotiales</taxon>
        <taxon>Aspergillaceae</taxon>
        <taxon>Aspergillus</taxon>
        <taxon>Aspergillus subgen. Fumigati</taxon>
    </lineage>
</organism>
<dbReference type="EC" id="7.2.2.10" evidence="9"/>
<dbReference type="EMBL" id="AAHF01000006">
    <property type="protein sequence ID" value="EAL88529.1"/>
    <property type="molecule type" value="Genomic_DNA"/>
</dbReference>
<dbReference type="RefSeq" id="XP_750567.1">
    <property type="nucleotide sequence ID" value="XM_745474.1"/>
</dbReference>
<dbReference type="SMR" id="Q4WND5"/>
<dbReference type="STRING" id="330879.Q4WND5"/>
<dbReference type="EnsemblFungi" id="EAL88529">
    <property type="protein sequence ID" value="EAL88529"/>
    <property type="gene ID" value="AFUA_6G06740"/>
</dbReference>
<dbReference type="GeneID" id="3508790"/>
<dbReference type="KEGG" id="afm:AFUA_6G06740"/>
<dbReference type="eggNOG" id="KOG0202">
    <property type="taxonomic scope" value="Eukaryota"/>
</dbReference>
<dbReference type="HOGENOM" id="CLU_002360_3_2_1"/>
<dbReference type="InParanoid" id="Q4WND5"/>
<dbReference type="OMA" id="PLWNNMM"/>
<dbReference type="OrthoDB" id="3352408at2759"/>
<dbReference type="PHI-base" id="PHI:10338"/>
<dbReference type="PHI-base" id="PHI:11766"/>
<dbReference type="Proteomes" id="UP000002530">
    <property type="component" value="Chromosome 6"/>
</dbReference>
<dbReference type="GO" id="GO:0005789">
    <property type="term" value="C:endoplasmic reticulum membrane"/>
    <property type="evidence" value="ECO:0007669"/>
    <property type="project" value="UniProtKB-SubCell"/>
</dbReference>
<dbReference type="GO" id="GO:0016020">
    <property type="term" value="C:membrane"/>
    <property type="evidence" value="ECO:0000318"/>
    <property type="project" value="GO_Central"/>
</dbReference>
<dbReference type="GO" id="GO:0005524">
    <property type="term" value="F:ATP binding"/>
    <property type="evidence" value="ECO:0007669"/>
    <property type="project" value="UniProtKB-KW"/>
</dbReference>
<dbReference type="GO" id="GO:0016887">
    <property type="term" value="F:ATP hydrolysis activity"/>
    <property type="evidence" value="ECO:0007669"/>
    <property type="project" value="InterPro"/>
</dbReference>
<dbReference type="GO" id="GO:0046872">
    <property type="term" value="F:metal ion binding"/>
    <property type="evidence" value="ECO:0007669"/>
    <property type="project" value="UniProtKB-KW"/>
</dbReference>
<dbReference type="GO" id="GO:0005388">
    <property type="term" value="F:P-type calcium transporter activity"/>
    <property type="evidence" value="ECO:0000318"/>
    <property type="project" value="GO_Central"/>
</dbReference>
<dbReference type="GO" id="GO:0070588">
    <property type="term" value="P:calcium ion transmembrane transport"/>
    <property type="evidence" value="ECO:0000318"/>
    <property type="project" value="GO_Central"/>
</dbReference>
<dbReference type="GO" id="GO:0006874">
    <property type="term" value="P:intracellular calcium ion homeostasis"/>
    <property type="evidence" value="ECO:0000318"/>
    <property type="project" value="GO_Central"/>
</dbReference>
<dbReference type="GO" id="GO:0006986">
    <property type="term" value="P:response to unfolded protein"/>
    <property type="evidence" value="ECO:0007669"/>
    <property type="project" value="UniProtKB-KW"/>
</dbReference>
<dbReference type="CDD" id="cd02083">
    <property type="entry name" value="P-type_ATPase_SERCA"/>
    <property type="match status" value="1"/>
</dbReference>
<dbReference type="FunFam" id="3.40.50.1000:FF:000005">
    <property type="entry name" value="Calcium-transporting ATPase 1"/>
    <property type="match status" value="1"/>
</dbReference>
<dbReference type="FunFam" id="3.40.1110.10:FF:000021">
    <property type="entry name" value="calcium-transporting ATPase, endoplasmic reticulum-type"/>
    <property type="match status" value="1"/>
</dbReference>
<dbReference type="FunFam" id="1.20.1110.10:FF:000037">
    <property type="entry name" value="Calcium-transporting ATPase, putative"/>
    <property type="match status" value="1"/>
</dbReference>
<dbReference type="FunFam" id="2.70.150.10:FF:000014">
    <property type="entry name" value="Calcium-transporting ATPase, putative"/>
    <property type="match status" value="1"/>
</dbReference>
<dbReference type="FunFam" id="1.20.1110.10:FF:000065">
    <property type="entry name" value="Sarcoplasmic/endoplasmic reticulum calcium ATPase 1"/>
    <property type="match status" value="1"/>
</dbReference>
<dbReference type="Gene3D" id="3.40.1110.10">
    <property type="entry name" value="Calcium-transporting ATPase, cytoplasmic domain N"/>
    <property type="match status" value="1"/>
</dbReference>
<dbReference type="Gene3D" id="2.70.150.10">
    <property type="entry name" value="Calcium-transporting ATPase, cytoplasmic transduction domain A"/>
    <property type="match status" value="1"/>
</dbReference>
<dbReference type="Gene3D" id="1.20.1110.10">
    <property type="entry name" value="Calcium-transporting ATPase, transmembrane domain"/>
    <property type="match status" value="1"/>
</dbReference>
<dbReference type="Gene3D" id="3.40.50.1000">
    <property type="entry name" value="HAD superfamily/HAD-like"/>
    <property type="match status" value="1"/>
</dbReference>
<dbReference type="InterPro" id="IPR006068">
    <property type="entry name" value="ATPase_P-typ_cation-transptr_C"/>
</dbReference>
<dbReference type="InterPro" id="IPR004014">
    <property type="entry name" value="ATPase_P-typ_cation-transptr_N"/>
</dbReference>
<dbReference type="InterPro" id="IPR023299">
    <property type="entry name" value="ATPase_P-typ_cyto_dom_N"/>
</dbReference>
<dbReference type="InterPro" id="IPR018303">
    <property type="entry name" value="ATPase_P-typ_P_site"/>
</dbReference>
<dbReference type="InterPro" id="IPR023298">
    <property type="entry name" value="ATPase_P-typ_TM_dom_sf"/>
</dbReference>
<dbReference type="InterPro" id="IPR008250">
    <property type="entry name" value="ATPase_P-typ_transduc_dom_A_sf"/>
</dbReference>
<dbReference type="InterPro" id="IPR036412">
    <property type="entry name" value="HAD-like_sf"/>
</dbReference>
<dbReference type="InterPro" id="IPR023214">
    <property type="entry name" value="HAD_sf"/>
</dbReference>
<dbReference type="InterPro" id="IPR005782">
    <property type="entry name" value="P-type_ATPase_IIA"/>
</dbReference>
<dbReference type="InterPro" id="IPR001757">
    <property type="entry name" value="P_typ_ATPase"/>
</dbReference>
<dbReference type="InterPro" id="IPR044492">
    <property type="entry name" value="P_typ_ATPase_HD_dom"/>
</dbReference>
<dbReference type="NCBIfam" id="TIGR01116">
    <property type="entry name" value="ATPase-IIA1_Ca"/>
    <property type="match status" value="1"/>
</dbReference>
<dbReference type="NCBIfam" id="TIGR01494">
    <property type="entry name" value="ATPase_P-type"/>
    <property type="match status" value="2"/>
</dbReference>
<dbReference type="PANTHER" id="PTHR42861">
    <property type="entry name" value="CALCIUM-TRANSPORTING ATPASE"/>
    <property type="match status" value="1"/>
</dbReference>
<dbReference type="Pfam" id="PF13246">
    <property type="entry name" value="Cation_ATPase"/>
    <property type="match status" value="1"/>
</dbReference>
<dbReference type="Pfam" id="PF00689">
    <property type="entry name" value="Cation_ATPase_C"/>
    <property type="match status" value="1"/>
</dbReference>
<dbReference type="Pfam" id="PF00690">
    <property type="entry name" value="Cation_ATPase_N"/>
    <property type="match status" value="1"/>
</dbReference>
<dbReference type="Pfam" id="PF00122">
    <property type="entry name" value="E1-E2_ATPase"/>
    <property type="match status" value="1"/>
</dbReference>
<dbReference type="Pfam" id="PF00702">
    <property type="entry name" value="Hydrolase"/>
    <property type="match status" value="1"/>
</dbReference>
<dbReference type="PRINTS" id="PR00119">
    <property type="entry name" value="CATATPASE"/>
</dbReference>
<dbReference type="PRINTS" id="PR00121">
    <property type="entry name" value="NAKATPASE"/>
</dbReference>
<dbReference type="SFLD" id="SFLDS00003">
    <property type="entry name" value="Haloacid_Dehalogenase"/>
    <property type="match status" value="1"/>
</dbReference>
<dbReference type="SFLD" id="SFLDF00027">
    <property type="entry name" value="p-type_atpase"/>
    <property type="match status" value="1"/>
</dbReference>
<dbReference type="SUPFAM" id="SSF81653">
    <property type="entry name" value="Calcium ATPase, transduction domain A"/>
    <property type="match status" value="1"/>
</dbReference>
<dbReference type="SUPFAM" id="SSF81665">
    <property type="entry name" value="Calcium ATPase, transmembrane domain M"/>
    <property type="match status" value="1"/>
</dbReference>
<dbReference type="SUPFAM" id="SSF56784">
    <property type="entry name" value="HAD-like"/>
    <property type="match status" value="1"/>
</dbReference>
<dbReference type="SUPFAM" id="SSF81660">
    <property type="entry name" value="Metal cation-transporting ATPase, ATP-binding domain N"/>
    <property type="match status" value="1"/>
</dbReference>
<dbReference type="PROSITE" id="PS00154">
    <property type="entry name" value="ATPASE_E1_E2"/>
    <property type="match status" value="1"/>
</dbReference>
<reference key="1">
    <citation type="journal article" date="2005" name="Nature">
        <title>Genomic sequence of the pathogenic and allergenic filamentous fungus Aspergillus fumigatus.</title>
        <authorList>
            <person name="Nierman W.C."/>
            <person name="Pain A."/>
            <person name="Anderson M.J."/>
            <person name="Wortman J.R."/>
            <person name="Kim H.S."/>
            <person name="Arroyo J."/>
            <person name="Berriman M."/>
            <person name="Abe K."/>
            <person name="Archer D.B."/>
            <person name="Bermejo C."/>
            <person name="Bennett J.W."/>
            <person name="Bowyer P."/>
            <person name="Chen D."/>
            <person name="Collins M."/>
            <person name="Coulsen R."/>
            <person name="Davies R."/>
            <person name="Dyer P.S."/>
            <person name="Farman M.L."/>
            <person name="Fedorova N."/>
            <person name="Fedorova N.D."/>
            <person name="Feldblyum T.V."/>
            <person name="Fischer R."/>
            <person name="Fosker N."/>
            <person name="Fraser A."/>
            <person name="Garcia J.L."/>
            <person name="Garcia M.J."/>
            <person name="Goble A."/>
            <person name="Goldman G.H."/>
            <person name="Gomi K."/>
            <person name="Griffith-Jones S."/>
            <person name="Gwilliam R."/>
            <person name="Haas B.J."/>
            <person name="Haas H."/>
            <person name="Harris D.E."/>
            <person name="Horiuchi H."/>
            <person name="Huang J."/>
            <person name="Humphray S."/>
            <person name="Jimenez J."/>
            <person name="Keller N."/>
            <person name="Khouri H."/>
            <person name="Kitamoto K."/>
            <person name="Kobayashi T."/>
            <person name="Konzack S."/>
            <person name="Kulkarni R."/>
            <person name="Kumagai T."/>
            <person name="Lafton A."/>
            <person name="Latge J.-P."/>
            <person name="Li W."/>
            <person name="Lord A."/>
            <person name="Lu C."/>
            <person name="Majoros W.H."/>
            <person name="May G.S."/>
            <person name="Miller B.L."/>
            <person name="Mohamoud Y."/>
            <person name="Molina M."/>
            <person name="Monod M."/>
            <person name="Mouyna I."/>
            <person name="Mulligan S."/>
            <person name="Murphy L.D."/>
            <person name="O'Neil S."/>
            <person name="Paulsen I."/>
            <person name="Penalva M.A."/>
            <person name="Pertea M."/>
            <person name="Price C."/>
            <person name="Pritchard B.L."/>
            <person name="Quail M.A."/>
            <person name="Rabbinowitsch E."/>
            <person name="Rawlins N."/>
            <person name="Rajandream M.A."/>
            <person name="Reichard U."/>
            <person name="Renauld H."/>
            <person name="Robson G.D."/>
            <person name="Rodriguez de Cordoba S."/>
            <person name="Rodriguez-Pena J.M."/>
            <person name="Ronning C.M."/>
            <person name="Rutter S."/>
            <person name="Salzberg S.L."/>
            <person name="Sanchez M."/>
            <person name="Sanchez-Ferrero J.C."/>
            <person name="Saunders D."/>
            <person name="Seeger K."/>
            <person name="Squares R."/>
            <person name="Squares S."/>
            <person name="Takeuchi M."/>
            <person name="Tekaia F."/>
            <person name="Turner G."/>
            <person name="Vazquez de Aldana C.R."/>
            <person name="Weidman J."/>
            <person name="White O."/>
            <person name="Woodward J.R."/>
            <person name="Yu J.-H."/>
            <person name="Fraser C.M."/>
            <person name="Galagan J.E."/>
            <person name="Asai K."/>
            <person name="Machida M."/>
            <person name="Hall N."/>
            <person name="Barrell B.G."/>
            <person name="Denning D.W."/>
        </authorList>
    </citation>
    <scope>NUCLEOTIDE SEQUENCE [LARGE SCALE GENOMIC DNA]</scope>
    <source>
        <strain>ATCC MYA-4609 / CBS 101355 / FGSC A1100 / Af293</strain>
    </source>
</reference>
<reference key="2">
    <citation type="journal article" date="2020" name="MBio">
        <title>Functional coupling between the unfolded protein response and endoplasmic reticulum/Golgi Ca2+-ATPases promotes stress tolerance, cell wall biosynthesis, and virulence of Aspergillus fumigatus.</title>
        <authorList>
            <person name="Weichert M."/>
            <person name="Guirao-Abad J."/>
            <person name="Aimanianda V."/>
            <person name="Krishnan K."/>
            <person name="Grisham C."/>
            <person name="Snyder P."/>
            <person name="Sheehan A."/>
            <person name="Abbu R.R."/>
            <person name="Liu H."/>
            <person name="Filler S.G."/>
            <person name="Gruenstein E.I."/>
            <person name="Latge J.P."/>
            <person name="Askew D.S."/>
        </authorList>
    </citation>
    <scope>FUNCTION</scope>
    <scope>INDUCTION</scope>
    <scope>SUBCELLULAR LOCATION</scope>
    <scope>DISRUPTION PHENOTYPE</scope>
</reference>
<reference key="3">
    <citation type="journal article" date="2021" name="MBio">
        <title>Pleiotropic effects of the P5-type ATPase SpfA on stress response networks contribute to virulence in the pathogenic mold Aspergillus fumigatus.</title>
        <authorList>
            <person name="Guirao-Abad J.P."/>
            <person name="Weichert M."/>
            <person name="Luengo-Gil G."/>
            <person name="Sze Wah Wong S."/>
            <person name="Aimanianda V."/>
            <person name="Grisham C."/>
            <person name="Malev N."/>
            <person name="Reddy S."/>
            <person name="Woollett L."/>
            <person name="Askew D.S."/>
        </authorList>
    </citation>
    <scope>FUNCTION</scope>
</reference>